<proteinExistence type="inferred from homology"/>
<comment type="function">
    <text evidence="1">Catalyzes the attachment of valine to tRNA(Val). As ValRS can inadvertently accommodate and process structurally similar amino acids such as threonine, to avoid such errors, it has a 'posttransfer' editing activity that hydrolyzes mischarged Thr-tRNA(Val) in a tRNA-dependent manner.</text>
</comment>
<comment type="catalytic activity">
    <reaction evidence="1">
        <text>tRNA(Val) + L-valine + ATP = L-valyl-tRNA(Val) + AMP + diphosphate</text>
        <dbReference type="Rhea" id="RHEA:10704"/>
        <dbReference type="Rhea" id="RHEA-COMP:9672"/>
        <dbReference type="Rhea" id="RHEA-COMP:9708"/>
        <dbReference type="ChEBI" id="CHEBI:30616"/>
        <dbReference type="ChEBI" id="CHEBI:33019"/>
        <dbReference type="ChEBI" id="CHEBI:57762"/>
        <dbReference type="ChEBI" id="CHEBI:78442"/>
        <dbReference type="ChEBI" id="CHEBI:78537"/>
        <dbReference type="ChEBI" id="CHEBI:456215"/>
        <dbReference type="EC" id="6.1.1.9"/>
    </reaction>
</comment>
<comment type="subunit">
    <text evidence="1">Monomer.</text>
</comment>
<comment type="subcellular location">
    <subcellularLocation>
        <location evidence="1">Cytoplasm</location>
    </subcellularLocation>
</comment>
<comment type="domain">
    <text evidence="1">ValRS has two distinct active sites: one for aminoacylation and one for editing. The misactivated threonine is translocated from the active site to the editing site.</text>
</comment>
<comment type="domain">
    <text evidence="1">The C-terminal coiled-coil domain is crucial for aminoacylation activity.</text>
</comment>
<comment type="similarity">
    <text evidence="1">Belongs to the class-I aminoacyl-tRNA synthetase family. ValS type 1 subfamily.</text>
</comment>
<sequence>MELAKSFEPAEIEKRWYARWESAGYFKARDKPDAPAYCIMLPPPNVTGTLHMGHAFQHTLMDALTRYHRMSGDNTLWQPGTDHAGIATQIVVERQLDAQNISRHDLGREKFLEKVWEWKAHSGSTITRQMRRLGTSPDWSRERFTMDAGLSKAVTEVFVRLYREGLIYRGKRLVNWDPVLGTAVSDLEVVSTEEDGFIWEINYPLEDGSGHLTVATTRPETLLGDTAVAVHPEDERYAHLIGKHVRLPIAERSIPVIADEYVDREFGTGVVKITPAHDFNDWQVGQRHKLMAISVLTLDAKMNELCPTEYQGLDRYDARQTLLDALQAKGLLVSAKPHKLMIPRGDRTHAVLEPMLTDQWFMSMEGLAKQGLAAVDSGELKFVPENWTTTYRQWLENIQDWCVSRQLWWGHRIPAWYDADGEFYVAHTEEEARKQAGGRELTQDNDVLDTWFSSALWPFSTLGWPEQTPELERYLPTSVLVTGFDIIFFWVARMVMMSKHLTGKVPFREVYVTGLVRDSEGQKMSKSKGNVLDPIDLIDGIAVGDLVAKRTQGLMNPKQAASIEKRTRKEFPDGIAAYGTDALRFTFASLATHGRDIKFDLQRAEGYRNFCNKLWNATRFALMNLEGHDCGQEADQPMDFSDADRWIAARLQQAIGDVHEAFAAYRFDQAARAVYEFVWDEYCDWYLELAKVQLNHGTPEQQRATRRTLATVLETTLRLAHPIIPFITEELWQKVAPLAGVHGDSIMLSAYPQVDEAQRHPGSVARMQLLKELVNACRTLRGEMNLSPAQRVPLVIEGDAAVINTLAPYMVALGKLGEVSAVTALPEADAPVALVGDMRMMLVVEIDKDAERARLAKEIARIQGEIRKAETKLANPSFVDKAPAAVVQQEQARLADFAAMLQKLEAQHARLG</sequence>
<gene>
    <name evidence="1" type="primary">valS</name>
    <name type="ordered locus">Tbd_0577</name>
</gene>
<evidence type="ECO:0000255" key="1">
    <source>
        <dbReference type="HAMAP-Rule" id="MF_02004"/>
    </source>
</evidence>
<name>SYV_THIDA</name>
<protein>
    <recommendedName>
        <fullName evidence="1">Valine--tRNA ligase</fullName>
        <ecNumber evidence="1">6.1.1.9</ecNumber>
    </recommendedName>
    <alternativeName>
        <fullName evidence="1">Valyl-tRNA synthetase</fullName>
        <shortName evidence="1">ValRS</shortName>
    </alternativeName>
</protein>
<keyword id="KW-0030">Aminoacyl-tRNA synthetase</keyword>
<keyword id="KW-0067">ATP-binding</keyword>
<keyword id="KW-0175">Coiled coil</keyword>
<keyword id="KW-0963">Cytoplasm</keyword>
<keyword id="KW-0436">Ligase</keyword>
<keyword id="KW-0547">Nucleotide-binding</keyword>
<keyword id="KW-0648">Protein biosynthesis</keyword>
<keyword id="KW-1185">Reference proteome</keyword>
<reference key="1">
    <citation type="journal article" date="2006" name="J. Bacteriol.">
        <title>The genome sequence of the obligately chemolithoautotrophic, facultatively anaerobic bacterium Thiobacillus denitrificans.</title>
        <authorList>
            <person name="Beller H.R."/>
            <person name="Chain P.S."/>
            <person name="Letain T.E."/>
            <person name="Chakicherla A."/>
            <person name="Larimer F.W."/>
            <person name="Richardson P.M."/>
            <person name="Coleman M.A."/>
            <person name="Wood A.P."/>
            <person name="Kelly D.P."/>
        </authorList>
    </citation>
    <scope>NUCLEOTIDE SEQUENCE [LARGE SCALE GENOMIC DNA]</scope>
    <source>
        <strain>ATCC 25259 / T1</strain>
    </source>
</reference>
<organism>
    <name type="scientific">Thiobacillus denitrificans (strain ATCC 25259 / T1)</name>
    <dbReference type="NCBI Taxonomy" id="292415"/>
    <lineage>
        <taxon>Bacteria</taxon>
        <taxon>Pseudomonadati</taxon>
        <taxon>Pseudomonadota</taxon>
        <taxon>Betaproteobacteria</taxon>
        <taxon>Nitrosomonadales</taxon>
        <taxon>Thiobacillaceae</taxon>
        <taxon>Thiobacillus</taxon>
    </lineage>
</organism>
<dbReference type="EC" id="6.1.1.9" evidence="1"/>
<dbReference type="EMBL" id="CP000116">
    <property type="protein sequence ID" value="AAZ96530.1"/>
    <property type="molecule type" value="Genomic_DNA"/>
</dbReference>
<dbReference type="RefSeq" id="WP_011311089.1">
    <property type="nucleotide sequence ID" value="NC_007404.1"/>
</dbReference>
<dbReference type="SMR" id="Q3SL86"/>
<dbReference type="STRING" id="292415.Tbd_0577"/>
<dbReference type="KEGG" id="tbd:Tbd_0577"/>
<dbReference type="eggNOG" id="COG0525">
    <property type="taxonomic scope" value="Bacteria"/>
</dbReference>
<dbReference type="HOGENOM" id="CLU_001493_0_2_4"/>
<dbReference type="OrthoDB" id="9810365at2"/>
<dbReference type="Proteomes" id="UP000008291">
    <property type="component" value="Chromosome"/>
</dbReference>
<dbReference type="GO" id="GO:0005829">
    <property type="term" value="C:cytosol"/>
    <property type="evidence" value="ECO:0007669"/>
    <property type="project" value="TreeGrafter"/>
</dbReference>
<dbReference type="GO" id="GO:0002161">
    <property type="term" value="F:aminoacyl-tRNA deacylase activity"/>
    <property type="evidence" value="ECO:0007669"/>
    <property type="project" value="InterPro"/>
</dbReference>
<dbReference type="GO" id="GO:0005524">
    <property type="term" value="F:ATP binding"/>
    <property type="evidence" value="ECO:0007669"/>
    <property type="project" value="UniProtKB-UniRule"/>
</dbReference>
<dbReference type="GO" id="GO:0004832">
    <property type="term" value="F:valine-tRNA ligase activity"/>
    <property type="evidence" value="ECO:0007669"/>
    <property type="project" value="UniProtKB-UniRule"/>
</dbReference>
<dbReference type="GO" id="GO:0006438">
    <property type="term" value="P:valyl-tRNA aminoacylation"/>
    <property type="evidence" value="ECO:0007669"/>
    <property type="project" value="UniProtKB-UniRule"/>
</dbReference>
<dbReference type="CDD" id="cd07962">
    <property type="entry name" value="Anticodon_Ia_Val"/>
    <property type="match status" value="1"/>
</dbReference>
<dbReference type="CDD" id="cd00817">
    <property type="entry name" value="ValRS_core"/>
    <property type="match status" value="1"/>
</dbReference>
<dbReference type="FunFam" id="1.10.287.380:FF:000001">
    <property type="entry name" value="Valine--tRNA ligase"/>
    <property type="match status" value="1"/>
</dbReference>
<dbReference type="FunFam" id="3.40.50.620:FF:000032">
    <property type="entry name" value="Valine--tRNA ligase"/>
    <property type="match status" value="1"/>
</dbReference>
<dbReference type="FunFam" id="1.10.730.10:FF:000009">
    <property type="entry name" value="Valine--tRNA ligase, mitochondrial"/>
    <property type="match status" value="1"/>
</dbReference>
<dbReference type="FunFam" id="3.40.50.620:FF:000078">
    <property type="entry name" value="Valine--tRNA ligase, mitochondrial"/>
    <property type="match status" value="1"/>
</dbReference>
<dbReference type="FunFam" id="3.90.740.10:FF:000005">
    <property type="entry name" value="Valine--tRNA ligase, mitochondrial"/>
    <property type="match status" value="1"/>
</dbReference>
<dbReference type="Gene3D" id="3.40.50.620">
    <property type="entry name" value="HUPs"/>
    <property type="match status" value="2"/>
</dbReference>
<dbReference type="Gene3D" id="1.10.730.10">
    <property type="entry name" value="Isoleucyl-tRNA Synthetase, Domain 1"/>
    <property type="match status" value="1"/>
</dbReference>
<dbReference type="Gene3D" id="1.10.287.380">
    <property type="entry name" value="Valyl-tRNA synthetase, C-terminal domain"/>
    <property type="match status" value="1"/>
</dbReference>
<dbReference type="Gene3D" id="3.90.740.10">
    <property type="entry name" value="Valyl/Leucyl/Isoleucyl-tRNA synthetase, editing domain"/>
    <property type="match status" value="1"/>
</dbReference>
<dbReference type="HAMAP" id="MF_02004">
    <property type="entry name" value="Val_tRNA_synth_type1"/>
    <property type="match status" value="1"/>
</dbReference>
<dbReference type="InterPro" id="IPR001412">
    <property type="entry name" value="aa-tRNA-synth_I_CS"/>
</dbReference>
<dbReference type="InterPro" id="IPR002300">
    <property type="entry name" value="aa-tRNA-synth_Ia"/>
</dbReference>
<dbReference type="InterPro" id="IPR033705">
    <property type="entry name" value="Anticodon_Ia_Val"/>
</dbReference>
<dbReference type="InterPro" id="IPR013155">
    <property type="entry name" value="M/V/L/I-tRNA-synth_anticd-bd"/>
</dbReference>
<dbReference type="InterPro" id="IPR014729">
    <property type="entry name" value="Rossmann-like_a/b/a_fold"/>
</dbReference>
<dbReference type="InterPro" id="IPR010978">
    <property type="entry name" value="tRNA-bd_arm"/>
</dbReference>
<dbReference type="InterPro" id="IPR009080">
    <property type="entry name" value="tRNAsynth_Ia_anticodon-bd"/>
</dbReference>
<dbReference type="InterPro" id="IPR037118">
    <property type="entry name" value="Val-tRNA_synth_C_sf"/>
</dbReference>
<dbReference type="InterPro" id="IPR019499">
    <property type="entry name" value="Val-tRNA_synth_tRNA-bd"/>
</dbReference>
<dbReference type="InterPro" id="IPR009008">
    <property type="entry name" value="Val/Leu/Ile-tRNA-synth_edit"/>
</dbReference>
<dbReference type="InterPro" id="IPR002303">
    <property type="entry name" value="Valyl-tRNA_ligase"/>
</dbReference>
<dbReference type="NCBIfam" id="NF004349">
    <property type="entry name" value="PRK05729.1"/>
    <property type="match status" value="1"/>
</dbReference>
<dbReference type="NCBIfam" id="TIGR00422">
    <property type="entry name" value="valS"/>
    <property type="match status" value="1"/>
</dbReference>
<dbReference type="PANTHER" id="PTHR11946:SF93">
    <property type="entry name" value="VALINE--TRNA LIGASE, CHLOROPLASTIC_MITOCHONDRIAL 2"/>
    <property type="match status" value="1"/>
</dbReference>
<dbReference type="PANTHER" id="PTHR11946">
    <property type="entry name" value="VALYL-TRNA SYNTHETASES"/>
    <property type="match status" value="1"/>
</dbReference>
<dbReference type="Pfam" id="PF08264">
    <property type="entry name" value="Anticodon_1"/>
    <property type="match status" value="1"/>
</dbReference>
<dbReference type="Pfam" id="PF00133">
    <property type="entry name" value="tRNA-synt_1"/>
    <property type="match status" value="1"/>
</dbReference>
<dbReference type="Pfam" id="PF10458">
    <property type="entry name" value="Val_tRNA-synt_C"/>
    <property type="match status" value="1"/>
</dbReference>
<dbReference type="PRINTS" id="PR00986">
    <property type="entry name" value="TRNASYNTHVAL"/>
</dbReference>
<dbReference type="SUPFAM" id="SSF47323">
    <property type="entry name" value="Anticodon-binding domain of a subclass of class I aminoacyl-tRNA synthetases"/>
    <property type="match status" value="1"/>
</dbReference>
<dbReference type="SUPFAM" id="SSF52374">
    <property type="entry name" value="Nucleotidylyl transferase"/>
    <property type="match status" value="1"/>
</dbReference>
<dbReference type="SUPFAM" id="SSF46589">
    <property type="entry name" value="tRNA-binding arm"/>
    <property type="match status" value="1"/>
</dbReference>
<dbReference type="SUPFAM" id="SSF50677">
    <property type="entry name" value="ValRS/IleRS/LeuRS editing domain"/>
    <property type="match status" value="1"/>
</dbReference>
<dbReference type="PROSITE" id="PS00178">
    <property type="entry name" value="AA_TRNA_LIGASE_I"/>
    <property type="match status" value="1"/>
</dbReference>
<accession>Q3SL86</accession>
<feature type="chain" id="PRO_0000224590" description="Valine--tRNA ligase">
    <location>
        <begin position="1"/>
        <end position="912"/>
    </location>
</feature>
<feature type="coiled-coil region" evidence="1">
    <location>
        <begin position="847"/>
        <end position="911"/>
    </location>
</feature>
<feature type="short sequence motif" description="'HIGH' region">
    <location>
        <begin position="44"/>
        <end position="54"/>
    </location>
</feature>
<feature type="short sequence motif" description="'KMSKS' region">
    <location>
        <begin position="523"/>
        <end position="527"/>
    </location>
</feature>
<feature type="binding site" evidence="1">
    <location>
        <position position="526"/>
    </location>
    <ligand>
        <name>ATP</name>
        <dbReference type="ChEBI" id="CHEBI:30616"/>
    </ligand>
</feature>